<comment type="function">
    <text evidence="1">Excises uracil residues from the DNA which can arise as a result of misincorporation of dUMP residues by DNA polymerase or due to deamination of cytosine.</text>
</comment>
<comment type="catalytic activity">
    <reaction evidence="1">
        <text>Hydrolyzes single-stranded DNA or mismatched double-stranded DNA and polynucleotides, releasing free uracil.</text>
        <dbReference type="EC" id="3.2.2.27"/>
    </reaction>
</comment>
<comment type="subcellular location">
    <subcellularLocation>
        <location evidence="1">Cytoplasm</location>
    </subcellularLocation>
</comment>
<comment type="similarity">
    <text evidence="1">Belongs to the uracil-DNA glycosylase (UDG) superfamily. UNG family.</text>
</comment>
<organism>
    <name type="scientific">Photorhabdus laumondii subsp. laumondii (strain DSM 15139 / CIP 105565 / TT01)</name>
    <name type="common">Photorhabdus luminescens subsp. laumondii</name>
    <dbReference type="NCBI Taxonomy" id="243265"/>
    <lineage>
        <taxon>Bacteria</taxon>
        <taxon>Pseudomonadati</taxon>
        <taxon>Pseudomonadota</taxon>
        <taxon>Gammaproteobacteria</taxon>
        <taxon>Enterobacterales</taxon>
        <taxon>Morganellaceae</taxon>
        <taxon>Photorhabdus</taxon>
    </lineage>
</organism>
<dbReference type="EC" id="3.2.2.27" evidence="1"/>
<dbReference type="EMBL" id="BX571870">
    <property type="protein sequence ID" value="CAE15745.1"/>
    <property type="molecule type" value="Genomic_DNA"/>
</dbReference>
<dbReference type="RefSeq" id="WP_011147555.1">
    <property type="nucleotide sequence ID" value="NC_005126.1"/>
</dbReference>
<dbReference type="SMR" id="Q7N1U8"/>
<dbReference type="STRING" id="243265.plu3371"/>
<dbReference type="GeneID" id="48849623"/>
<dbReference type="KEGG" id="plu:plu3371"/>
<dbReference type="eggNOG" id="COG0692">
    <property type="taxonomic scope" value="Bacteria"/>
</dbReference>
<dbReference type="HOGENOM" id="CLU_032162_3_1_6"/>
<dbReference type="OrthoDB" id="9804372at2"/>
<dbReference type="Proteomes" id="UP000002514">
    <property type="component" value="Chromosome"/>
</dbReference>
<dbReference type="GO" id="GO:0005737">
    <property type="term" value="C:cytoplasm"/>
    <property type="evidence" value="ECO:0007669"/>
    <property type="project" value="UniProtKB-SubCell"/>
</dbReference>
<dbReference type="GO" id="GO:0004844">
    <property type="term" value="F:uracil DNA N-glycosylase activity"/>
    <property type="evidence" value="ECO:0007669"/>
    <property type="project" value="UniProtKB-UniRule"/>
</dbReference>
<dbReference type="GO" id="GO:0097510">
    <property type="term" value="P:base-excision repair, AP site formation via deaminated base removal"/>
    <property type="evidence" value="ECO:0007669"/>
    <property type="project" value="TreeGrafter"/>
</dbReference>
<dbReference type="CDD" id="cd10027">
    <property type="entry name" value="UDG-F1-like"/>
    <property type="match status" value="1"/>
</dbReference>
<dbReference type="FunFam" id="3.40.470.10:FF:000001">
    <property type="entry name" value="Uracil-DNA glycosylase"/>
    <property type="match status" value="1"/>
</dbReference>
<dbReference type="Gene3D" id="3.40.470.10">
    <property type="entry name" value="Uracil-DNA glycosylase-like domain"/>
    <property type="match status" value="1"/>
</dbReference>
<dbReference type="HAMAP" id="MF_00148">
    <property type="entry name" value="UDG"/>
    <property type="match status" value="1"/>
</dbReference>
<dbReference type="InterPro" id="IPR002043">
    <property type="entry name" value="UDG_fam1"/>
</dbReference>
<dbReference type="InterPro" id="IPR018085">
    <property type="entry name" value="Ura-DNA_Glyclase_AS"/>
</dbReference>
<dbReference type="InterPro" id="IPR005122">
    <property type="entry name" value="Uracil-DNA_glycosylase-like"/>
</dbReference>
<dbReference type="InterPro" id="IPR036895">
    <property type="entry name" value="Uracil-DNA_glycosylase-like_sf"/>
</dbReference>
<dbReference type="NCBIfam" id="NF003588">
    <property type="entry name" value="PRK05254.1-1"/>
    <property type="match status" value="1"/>
</dbReference>
<dbReference type="NCBIfam" id="NF003589">
    <property type="entry name" value="PRK05254.1-2"/>
    <property type="match status" value="1"/>
</dbReference>
<dbReference type="NCBIfam" id="NF003591">
    <property type="entry name" value="PRK05254.1-4"/>
    <property type="match status" value="1"/>
</dbReference>
<dbReference type="NCBIfam" id="NF003592">
    <property type="entry name" value="PRK05254.1-5"/>
    <property type="match status" value="1"/>
</dbReference>
<dbReference type="NCBIfam" id="TIGR00628">
    <property type="entry name" value="ung"/>
    <property type="match status" value="1"/>
</dbReference>
<dbReference type="PANTHER" id="PTHR11264">
    <property type="entry name" value="URACIL-DNA GLYCOSYLASE"/>
    <property type="match status" value="1"/>
</dbReference>
<dbReference type="PANTHER" id="PTHR11264:SF0">
    <property type="entry name" value="URACIL-DNA GLYCOSYLASE"/>
    <property type="match status" value="1"/>
</dbReference>
<dbReference type="Pfam" id="PF03167">
    <property type="entry name" value="UDG"/>
    <property type="match status" value="1"/>
</dbReference>
<dbReference type="SMART" id="SM00986">
    <property type="entry name" value="UDG"/>
    <property type="match status" value="1"/>
</dbReference>
<dbReference type="SMART" id="SM00987">
    <property type="entry name" value="UreE_C"/>
    <property type="match status" value="1"/>
</dbReference>
<dbReference type="SUPFAM" id="SSF52141">
    <property type="entry name" value="Uracil-DNA glycosylase-like"/>
    <property type="match status" value="1"/>
</dbReference>
<dbReference type="PROSITE" id="PS00130">
    <property type="entry name" value="U_DNA_GLYCOSYLASE"/>
    <property type="match status" value="1"/>
</dbReference>
<evidence type="ECO:0000255" key="1">
    <source>
        <dbReference type="HAMAP-Rule" id="MF_00148"/>
    </source>
</evidence>
<gene>
    <name evidence="1" type="primary">ung</name>
    <name type="ordered locus">plu3371</name>
</gene>
<feature type="chain" id="PRO_0000176125" description="Uracil-DNA glycosylase">
    <location>
        <begin position="1"/>
        <end position="226"/>
    </location>
</feature>
<feature type="active site" description="Proton acceptor" evidence="1">
    <location>
        <position position="64"/>
    </location>
</feature>
<name>UNG_PHOLL</name>
<sequence length="226" mass="25169">MSAPLTWHDVIGNEKEQPYFLDTLAYVAKERQAGKTIYPPQQDVFNAFRYTELADIKVVILGQDPYHGPNQAHGLSFSVQPGIPAPPSLVNMYKELASDIPDFQHPNHGCLISWAKQGVLLLNTVLTVERGNAHSHANLGWETFTDKVIAAINEHRSGVVFLLWGSHAQKKGYFIDANKHHVLKAPHPSPLSAHRGFFGCQHFSKANTLLEKQGIAPINWTPELPQ</sequence>
<proteinExistence type="inferred from homology"/>
<reference key="1">
    <citation type="journal article" date="2003" name="Nat. Biotechnol.">
        <title>The genome sequence of the entomopathogenic bacterium Photorhabdus luminescens.</title>
        <authorList>
            <person name="Duchaud E."/>
            <person name="Rusniok C."/>
            <person name="Frangeul L."/>
            <person name="Buchrieser C."/>
            <person name="Givaudan A."/>
            <person name="Taourit S."/>
            <person name="Bocs S."/>
            <person name="Boursaux-Eude C."/>
            <person name="Chandler M."/>
            <person name="Charles J.-F."/>
            <person name="Dassa E."/>
            <person name="Derose R."/>
            <person name="Derzelle S."/>
            <person name="Freyssinet G."/>
            <person name="Gaudriault S."/>
            <person name="Medigue C."/>
            <person name="Lanois A."/>
            <person name="Powell K."/>
            <person name="Siguier P."/>
            <person name="Vincent R."/>
            <person name="Wingate V."/>
            <person name="Zouine M."/>
            <person name="Glaser P."/>
            <person name="Boemare N."/>
            <person name="Danchin A."/>
            <person name="Kunst F."/>
        </authorList>
    </citation>
    <scope>NUCLEOTIDE SEQUENCE [LARGE SCALE GENOMIC DNA]</scope>
    <source>
        <strain>DSM 15139 / CIP 105565 / TT01</strain>
    </source>
</reference>
<keyword id="KW-0963">Cytoplasm</keyword>
<keyword id="KW-0227">DNA damage</keyword>
<keyword id="KW-0234">DNA repair</keyword>
<keyword id="KW-0378">Hydrolase</keyword>
<keyword id="KW-1185">Reference proteome</keyword>
<protein>
    <recommendedName>
        <fullName evidence="1">Uracil-DNA glycosylase</fullName>
        <shortName evidence="1">UDG</shortName>
        <ecNumber evidence="1">3.2.2.27</ecNumber>
    </recommendedName>
</protein>
<accession>Q7N1U8</accession>